<feature type="chain" id="PRO_0000079668" description="45 kDa cell wall protein">
    <location>
        <begin position="1"/>
        <end position="13" status="greater than"/>
    </location>
</feature>
<feature type="non-terminal residue" evidence="2">
    <location>
        <position position="13"/>
    </location>
</feature>
<name>CWP12_TOBAC</name>
<sequence>QDAYRFLXTHTYG</sequence>
<keyword id="KW-0134">Cell wall</keyword>
<keyword id="KW-0903">Direct protein sequencing</keyword>
<keyword id="KW-1185">Reference proteome</keyword>
<keyword id="KW-0964">Secreted</keyword>
<proteinExistence type="evidence at protein level"/>
<comment type="subcellular location">
    <subcellularLocation>
        <location evidence="1">Secreted</location>
        <location evidence="1">Cell wall</location>
    </subcellularLocation>
</comment>
<organism>
    <name type="scientific">Nicotiana tabacum</name>
    <name type="common">Common tobacco</name>
    <dbReference type="NCBI Taxonomy" id="4097"/>
    <lineage>
        <taxon>Eukaryota</taxon>
        <taxon>Viridiplantae</taxon>
        <taxon>Streptophyta</taxon>
        <taxon>Embryophyta</taxon>
        <taxon>Tracheophyta</taxon>
        <taxon>Spermatophyta</taxon>
        <taxon>Magnoliopsida</taxon>
        <taxon>eudicotyledons</taxon>
        <taxon>Gunneridae</taxon>
        <taxon>Pentapetalae</taxon>
        <taxon>asterids</taxon>
        <taxon>lamiids</taxon>
        <taxon>Solanales</taxon>
        <taxon>Solanaceae</taxon>
        <taxon>Nicotianoideae</taxon>
        <taxon>Nicotianeae</taxon>
        <taxon>Nicotiana</taxon>
    </lineage>
</organism>
<reference evidence="3" key="1">
    <citation type="journal article" date="1997" name="J. Biol. Chem.">
        <title>Differential extraction and protein sequencing reveals major differences in patterns of primary cell wall proteins from plants.</title>
        <authorList>
            <person name="Robertson D."/>
            <person name="Mitchell G.P."/>
            <person name="Gilroy J.S."/>
            <person name="Gerrish C."/>
            <person name="Bolwell G.P."/>
            <person name="Slabas A.R."/>
        </authorList>
    </citation>
    <scope>PROTEIN SEQUENCE</scope>
    <scope>SUBCELLULAR LOCATION</scope>
</reference>
<protein>
    <recommendedName>
        <fullName>45 kDa cell wall protein</fullName>
    </recommendedName>
</protein>
<dbReference type="PaxDb" id="4097-P80789"/>
<dbReference type="Proteomes" id="UP000084051">
    <property type="component" value="Unplaced"/>
</dbReference>
<dbReference type="GO" id="GO:0005576">
    <property type="term" value="C:extracellular region"/>
    <property type="evidence" value="ECO:0007669"/>
    <property type="project" value="UniProtKB-KW"/>
</dbReference>
<accession>P80789</accession>
<evidence type="ECO:0000269" key="1">
    <source>
    </source>
</evidence>
<evidence type="ECO:0000303" key="2">
    <source>
    </source>
</evidence>
<evidence type="ECO:0000305" key="3"/>